<dbReference type="EC" id="3.1.1.4"/>
<dbReference type="SMR" id="P0DM49"/>
<dbReference type="GO" id="GO:0005576">
    <property type="term" value="C:extracellular region"/>
    <property type="evidence" value="ECO:0007669"/>
    <property type="project" value="UniProtKB-SubCell"/>
</dbReference>
<dbReference type="GO" id="GO:0005509">
    <property type="term" value="F:calcium ion binding"/>
    <property type="evidence" value="ECO:0007669"/>
    <property type="project" value="InterPro"/>
</dbReference>
<dbReference type="GO" id="GO:0004623">
    <property type="term" value="F:phospholipase A2 activity"/>
    <property type="evidence" value="ECO:0007669"/>
    <property type="project" value="UniProtKB-EC"/>
</dbReference>
<dbReference type="GO" id="GO:0090729">
    <property type="term" value="F:toxin activity"/>
    <property type="evidence" value="ECO:0007669"/>
    <property type="project" value="UniProtKB-KW"/>
</dbReference>
<dbReference type="GO" id="GO:0050482">
    <property type="term" value="P:arachidonate secretion"/>
    <property type="evidence" value="ECO:0007669"/>
    <property type="project" value="InterPro"/>
</dbReference>
<dbReference type="GO" id="GO:0016042">
    <property type="term" value="P:lipid catabolic process"/>
    <property type="evidence" value="ECO:0007669"/>
    <property type="project" value="UniProtKB-KW"/>
</dbReference>
<dbReference type="GO" id="GO:0006644">
    <property type="term" value="P:phospholipid metabolic process"/>
    <property type="evidence" value="ECO:0007669"/>
    <property type="project" value="InterPro"/>
</dbReference>
<dbReference type="Gene3D" id="1.20.90.10">
    <property type="entry name" value="Phospholipase A2 domain"/>
    <property type="match status" value="1"/>
</dbReference>
<dbReference type="InterPro" id="IPR001211">
    <property type="entry name" value="PLipase_A2"/>
</dbReference>
<dbReference type="InterPro" id="IPR016090">
    <property type="entry name" value="PLipase_A2_dom"/>
</dbReference>
<dbReference type="InterPro" id="IPR036444">
    <property type="entry name" value="PLipase_A2_dom_sf"/>
</dbReference>
<dbReference type="Pfam" id="PF00068">
    <property type="entry name" value="Phospholip_A2_1"/>
    <property type="match status" value="1"/>
</dbReference>
<dbReference type="PRINTS" id="PR00389">
    <property type="entry name" value="PHPHLIPASEA2"/>
</dbReference>
<dbReference type="SUPFAM" id="SSF48619">
    <property type="entry name" value="Phospholipase A2, PLA2"/>
    <property type="match status" value="1"/>
</dbReference>
<feature type="chain" id="PRO_0000423030" description="Phospholipase A2 neuwieditoxin-1">
    <location>
        <begin position="1"/>
        <end position="35" status="greater than"/>
    </location>
</feature>
<feature type="binding site" evidence="1">
    <location>
        <position position="27"/>
    </location>
    <ligand>
        <name>Ca(2+)</name>
        <dbReference type="ChEBI" id="CHEBI:29108"/>
    </ligand>
</feature>
<feature type="binding site" evidence="1">
    <location>
        <position position="29"/>
    </location>
    <ligand>
        <name>Ca(2+)</name>
        <dbReference type="ChEBI" id="CHEBI:29108"/>
    </ligand>
</feature>
<feature type="binding site" evidence="1">
    <location>
        <position position="31"/>
    </location>
    <ligand>
        <name>Ca(2+)</name>
        <dbReference type="ChEBI" id="CHEBI:29108"/>
    </ligand>
</feature>
<feature type="disulfide bond" evidence="1">
    <location>
        <begin position="26"/>
        <end status="unknown"/>
    </location>
</feature>
<feature type="disulfide bond" evidence="1">
    <location>
        <begin position="28"/>
        <end status="unknown"/>
    </location>
</feature>
<feature type="non-terminal residue">
    <location>
        <position position="35"/>
    </location>
</feature>
<evidence type="ECO:0000250" key="1"/>
<evidence type="ECO:0000269" key="2">
    <source ref="1"/>
</evidence>
<evidence type="ECO:0000305" key="3"/>
<organism>
    <name type="scientific">Bothrops pauloensis</name>
    <name type="common">Neuwied's lancehead</name>
    <name type="synonym">Bothrops neuwiedi pauloensis</name>
    <dbReference type="NCBI Taxonomy" id="1042543"/>
    <lineage>
        <taxon>Eukaryota</taxon>
        <taxon>Metazoa</taxon>
        <taxon>Chordata</taxon>
        <taxon>Craniata</taxon>
        <taxon>Vertebrata</taxon>
        <taxon>Euteleostomi</taxon>
        <taxon>Lepidosauria</taxon>
        <taxon>Squamata</taxon>
        <taxon>Bifurcata</taxon>
        <taxon>Unidentata</taxon>
        <taxon>Episquamata</taxon>
        <taxon>Toxicofera</taxon>
        <taxon>Serpentes</taxon>
        <taxon>Colubroidea</taxon>
        <taxon>Viperidae</taxon>
        <taxon>Crotalinae</taxon>
        <taxon>Bothrops</taxon>
    </lineage>
</organism>
<sequence length="35" mass="3767">DLVQFGQMILKVAGRSLPKSYGAYGCYCGWGGRGK</sequence>
<accession>P0DM49</accession>
<protein>
    <recommendedName>
        <fullName>Phospholipase A2 neuwieditoxin-1</fullName>
        <shortName>NeuTX-1</shortName>
        <shortName>PLA2</shortName>
        <ecNumber>3.1.1.4</ecNumber>
    </recommendedName>
    <alternativeName>
        <fullName>Neuwieditoxin-I</fullName>
        <shortName>NeuTX-I</shortName>
    </alternativeName>
    <alternativeName>
        <fullName>Phosphatidylcholine 2-acylhydrolase</fullName>
    </alternativeName>
</protein>
<reference key="1">
    <citation type="journal article" date="2007" name="J. Venom. Anim. Toxins Incl. Trop. Dis.">
        <title>Purification and N-terminal sequencing of two presynaptic neurotoxic PLA2, neuwieditoxin-I and neuwieditoxin-II, from Bothrops neuwiedi pauloensis (Jararaca pintada) venom.</title>
        <authorList>
            <person name="Borja-Oliveira C.R."/>
            <person name="Kassab B.H."/>
            <person name="Soares A.M."/>
            <person name="Toyama M.H."/>
            <person name="Giglio J.R."/>
            <person name="Marangoni S."/>
            <person name="Re L."/>
            <person name="Rodrigues-Simioni L."/>
        </authorList>
    </citation>
    <scope>PROTEIN SEQUENCE</scope>
    <scope>FUNCTION</scope>
    <scope>CATALYTIC ACTIVITY</scope>
    <scope>SUBUNIT</scope>
    <source>
        <tissue>Venom</tissue>
    </source>
</reference>
<keyword id="KW-0106">Calcium</keyword>
<keyword id="KW-0903">Direct protein sequencing</keyword>
<keyword id="KW-1015">Disulfide bond</keyword>
<keyword id="KW-0378">Hydrolase</keyword>
<keyword id="KW-0442">Lipid degradation</keyword>
<keyword id="KW-0443">Lipid metabolism</keyword>
<keyword id="KW-0479">Metal-binding</keyword>
<keyword id="KW-0528">Neurotoxin</keyword>
<keyword id="KW-0638">Presynaptic neurotoxin</keyword>
<keyword id="KW-0964">Secreted</keyword>
<keyword id="KW-0800">Toxin</keyword>
<comment type="function">
    <text evidence="2">Snake venom phospholipase A2 (PLA2) that shows presynaptic neurotoxicity. 10 ug/ml of this protein produce complete neuromuscular blockade up to 80 minutes, without inhibiting the responses to acetylcholine (ACh) and potassium chloride (KCl). In addition, it produces a calcium-dependent blockade of acetylcholine release and causes appearance of giant miniature end-plate potentials. PLA2 catalyzes the calcium-dependent hydrolysis of the 2-acyl groups in 3-sn-phosphoglycerides.</text>
</comment>
<comment type="catalytic activity">
    <reaction evidence="2">
        <text>a 1,2-diacyl-sn-glycero-3-phosphocholine + H2O = a 1-acyl-sn-glycero-3-phosphocholine + a fatty acid + H(+)</text>
        <dbReference type="Rhea" id="RHEA:15801"/>
        <dbReference type="ChEBI" id="CHEBI:15377"/>
        <dbReference type="ChEBI" id="CHEBI:15378"/>
        <dbReference type="ChEBI" id="CHEBI:28868"/>
        <dbReference type="ChEBI" id="CHEBI:57643"/>
        <dbReference type="ChEBI" id="CHEBI:58168"/>
        <dbReference type="EC" id="3.1.1.4"/>
    </reaction>
</comment>
<comment type="cofactor">
    <cofactor evidence="1">
        <name>Ca(2+)</name>
        <dbReference type="ChEBI" id="CHEBI:29108"/>
    </cofactor>
    <text evidence="1">Binds 1 Ca(2+) ion.</text>
</comment>
<comment type="subunit">
    <text evidence="2">Dimer.</text>
</comment>
<comment type="subcellular location">
    <subcellularLocation>
        <location>Secreted</location>
    </subcellularLocation>
</comment>
<comment type="tissue specificity">
    <text>Expressed by the venom gland.</text>
</comment>
<comment type="similarity">
    <text evidence="3">Belongs to the phospholipase A2 family. Group II subfamily. D49 sub-subfamily.</text>
</comment>
<name>PA2X1_BOTPA</name>
<proteinExistence type="evidence at protein level"/>